<protein>
    <recommendedName>
        <fullName>Phorbol-12-myristate-13-acetate-induced protein 1</fullName>
    </recommendedName>
    <alternativeName>
        <fullName>Protein Noxa</fullName>
    </alternativeName>
</protein>
<feature type="chain" id="PRO_0000333229" description="Phorbol-12-myristate-13-acetate-induced protein 1">
    <location>
        <begin position="1"/>
        <end position="54"/>
    </location>
</feature>
<feature type="region of interest" description="Disordered" evidence="3">
    <location>
        <begin position="1"/>
        <end position="20"/>
    </location>
</feature>
<feature type="region of interest" description="Required for mitochondrial location" evidence="1">
    <location>
        <begin position="41"/>
        <end position="50"/>
    </location>
</feature>
<feature type="short sequence motif" description="BH3">
    <location>
        <begin position="29"/>
        <end position="37"/>
    </location>
</feature>
<comment type="function">
    <text evidence="1">Promotes activation of caspases and apoptosis. Promotes mitochondrial membrane changes and efflux of apoptogenic proteins from the mitochondria. Contributes to p53/TP53-dependent apoptosis after radiation exposure. Promotes proteasomal degradation of MCL1. Competes with BAK1 and with BIM/BCL2L11 for binding to MCL1; can displace BAK1 and BIM/BCL2L11 from their binding sites (By similarity).</text>
</comment>
<comment type="subunit">
    <text evidence="2">Interacts with MCL1 (By similarity). Interacts with BCL2A1 (By similarity). Interacts with BAX (By similarity). Interacts with BCL2L10 (By similarity).</text>
</comment>
<comment type="subcellular location">
    <subcellularLocation>
        <location evidence="2">Mitochondrion</location>
    </subcellularLocation>
</comment>
<comment type="domain">
    <text evidence="1">The BH3 motif is essential for pro-apoptotic activity.</text>
</comment>
<comment type="similarity">
    <text evidence="4">Belongs to the PMAIP1 family.</text>
</comment>
<evidence type="ECO:0000250" key="1"/>
<evidence type="ECO:0000250" key="2">
    <source>
        <dbReference type="UniProtKB" id="Q13794"/>
    </source>
</evidence>
<evidence type="ECO:0000256" key="3">
    <source>
        <dbReference type="SAM" id="MobiDB-lite"/>
    </source>
</evidence>
<evidence type="ECO:0000305" key="4"/>
<dbReference type="EMBL" id="DQ449072">
    <property type="protein sequence ID" value="ABE02691.1"/>
    <property type="molecule type" value="mRNA"/>
</dbReference>
<dbReference type="RefSeq" id="NP_001182700.1">
    <property type="nucleotide sequence ID" value="NM_001195771.1"/>
</dbReference>
<dbReference type="SMR" id="Q1PCT2"/>
<dbReference type="FunCoup" id="Q1PCT2">
    <property type="interactions" value="61"/>
</dbReference>
<dbReference type="STRING" id="9615.ENSCAFP00000032282"/>
<dbReference type="PaxDb" id="9612-ENSCAFP00000032282"/>
<dbReference type="Ensembl" id="ENSCAFT00000108456.1">
    <property type="protein sequence ID" value="ENSCAFP00000068121.1"/>
    <property type="gene ID" value="ENSCAFG00000057830.1"/>
</dbReference>
<dbReference type="Ensembl" id="ENSCAFT00040008159.1">
    <property type="protein sequence ID" value="ENSCAFP00040007110.1"/>
    <property type="gene ID" value="ENSCAFG00040004265.1"/>
</dbReference>
<dbReference type="Ensembl" id="ENSCAFT00845000467.1">
    <property type="protein sequence ID" value="ENSCAFP00845000319.1"/>
    <property type="gene ID" value="ENSCAFG00845000304.1"/>
</dbReference>
<dbReference type="GeneID" id="100502558"/>
<dbReference type="KEGG" id="cfa:100502558"/>
<dbReference type="CTD" id="5366"/>
<dbReference type="VEuPathDB" id="HostDB:ENSCAFG00845000304"/>
<dbReference type="eggNOG" id="ENOG502SEAE">
    <property type="taxonomic scope" value="Eukaryota"/>
</dbReference>
<dbReference type="GeneTree" id="ENSGT00530000065105"/>
<dbReference type="HOGENOM" id="CLU_3049644_0_0_1"/>
<dbReference type="InParanoid" id="Q1PCT2"/>
<dbReference type="OMA" id="RIGDKWD"/>
<dbReference type="OrthoDB" id="8793015at2759"/>
<dbReference type="Reactome" id="R-CFA-111448">
    <property type="pathway name" value="Activation of NOXA and translocation to mitochondria"/>
</dbReference>
<dbReference type="Reactome" id="R-CFA-111453">
    <property type="pathway name" value="BH3-only proteins associate with and inactivate anti-apoptotic BCL-2 members"/>
</dbReference>
<dbReference type="Proteomes" id="UP000002254">
    <property type="component" value="Chromosome 1"/>
</dbReference>
<dbReference type="Proteomes" id="UP000694429">
    <property type="component" value="Unplaced"/>
</dbReference>
<dbReference type="Proteomes" id="UP000694542">
    <property type="component" value="Chromosome 1"/>
</dbReference>
<dbReference type="Proteomes" id="UP000805418">
    <property type="component" value="Chromosome 1"/>
</dbReference>
<dbReference type="Bgee" id="ENSCAFG00000023829">
    <property type="expression patterns" value="Expressed in granulocyte and 43 other cell types or tissues"/>
</dbReference>
<dbReference type="GO" id="GO:0097136">
    <property type="term" value="C:Bcl-2 family protein complex"/>
    <property type="evidence" value="ECO:0007669"/>
    <property type="project" value="Ensembl"/>
</dbReference>
<dbReference type="GO" id="GO:0005829">
    <property type="term" value="C:cytosol"/>
    <property type="evidence" value="ECO:0007669"/>
    <property type="project" value="Ensembl"/>
</dbReference>
<dbReference type="GO" id="GO:0005739">
    <property type="term" value="C:mitochondrion"/>
    <property type="evidence" value="ECO:0000318"/>
    <property type="project" value="GO_Central"/>
</dbReference>
<dbReference type="GO" id="GO:0005634">
    <property type="term" value="C:nucleus"/>
    <property type="evidence" value="ECO:0007669"/>
    <property type="project" value="Ensembl"/>
</dbReference>
<dbReference type="GO" id="GO:0042149">
    <property type="term" value="P:cellular response to glucose starvation"/>
    <property type="evidence" value="ECO:0007669"/>
    <property type="project" value="Ensembl"/>
</dbReference>
<dbReference type="GO" id="GO:0071456">
    <property type="term" value="P:cellular response to hypoxia"/>
    <property type="evidence" value="ECO:0007669"/>
    <property type="project" value="Ensembl"/>
</dbReference>
<dbReference type="GO" id="GO:0051607">
    <property type="term" value="P:defense response to virus"/>
    <property type="evidence" value="ECO:0007669"/>
    <property type="project" value="Ensembl"/>
</dbReference>
<dbReference type="GO" id="GO:0006974">
    <property type="term" value="P:DNA damage response"/>
    <property type="evidence" value="ECO:0007669"/>
    <property type="project" value="InterPro"/>
</dbReference>
<dbReference type="GO" id="GO:0072332">
    <property type="term" value="P:intrinsic apoptotic signaling pathway by p53 class mediator"/>
    <property type="evidence" value="ECO:0007669"/>
    <property type="project" value="Ensembl"/>
</dbReference>
<dbReference type="GO" id="GO:0043517">
    <property type="term" value="P:positive regulation of DNA damage response, signal transduction by p53 class mediator"/>
    <property type="evidence" value="ECO:0007669"/>
    <property type="project" value="Ensembl"/>
</dbReference>
<dbReference type="GO" id="GO:1902043">
    <property type="term" value="P:positive regulation of extrinsic apoptotic signaling pathway via death domain receptors"/>
    <property type="evidence" value="ECO:0007669"/>
    <property type="project" value="Ensembl"/>
</dbReference>
<dbReference type="GO" id="GO:0010907">
    <property type="term" value="P:positive regulation of glucose metabolic process"/>
    <property type="evidence" value="ECO:0007669"/>
    <property type="project" value="Ensembl"/>
</dbReference>
<dbReference type="GO" id="GO:2001244">
    <property type="term" value="P:positive regulation of intrinsic apoptotic signaling pathway"/>
    <property type="evidence" value="ECO:0007669"/>
    <property type="project" value="Ensembl"/>
</dbReference>
<dbReference type="GO" id="GO:0090200">
    <property type="term" value="P:positive regulation of release of cytochrome c from mitochondria"/>
    <property type="evidence" value="ECO:0007669"/>
    <property type="project" value="Ensembl"/>
</dbReference>
<dbReference type="GO" id="GO:0010498">
    <property type="term" value="P:proteasomal protein catabolic process"/>
    <property type="evidence" value="ECO:0007669"/>
    <property type="project" value="Ensembl"/>
</dbReference>
<dbReference type="GO" id="GO:0072593">
    <property type="term" value="P:reactive oxygen species metabolic process"/>
    <property type="evidence" value="ECO:0007669"/>
    <property type="project" value="Ensembl"/>
</dbReference>
<dbReference type="GO" id="GO:0046902">
    <property type="term" value="P:regulation of mitochondrial membrane permeability"/>
    <property type="evidence" value="ECO:0007669"/>
    <property type="project" value="Ensembl"/>
</dbReference>
<dbReference type="GO" id="GO:0001836">
    <property type="term" value="P:release of cytochrome c from mitochondria"/>
    <property type="evidence" value="ECO:0007669"/>
    <property type="project" value="InterPro"/>
</dbReference>
<dbReference type="GO" id="GO:0043331">
    <property type="term" value="P:response to dsRNA"/>
    <property type="evidence" value="ECO:0007669"/>
    <property type="project" value="Ensembl"/>
</dbReference>
<dbReference type="InterPro" id="IPR024140">
    <property type="entry name" value="Noxa"/>
</dbReference>
<dbReference type="PANTHER" id="PTHR14299">
    <property type="entry name" value="PHORBOL-12-MYRISTATE-13-ACETATE-INDUCED PROTEIN 1"/>
    <property type="match status" value="1"/>
</dbReference>
<dbReference type="PANTHER" id="PTHR14299:SF0">
    <property type="entry name" value="PHORBOL-12-MYRISTATE-13-ACETATE-INDUCED PROTEIN 1"/>
    <property type="match status" value="1"/>
</dbReference>
<dbReference type="Pfam" id="PF15150">
    <property type="entry name" value="PMAIP1"/>
    <property type="match status" value="1"/>
</dbReference>
<accession>Q1PCT2</accession>
<sequence length="54" mass="6126">MPGRKARKSAQPGPTRAPEELEVECAIQLRKFGDKLNFRQKLLNLLSKLFRSGT</sequence>
<organism>
    <name type="scientific">Canis lupus familiaris</name>
    <name type="common">Dog</name>
    <name type="synonym">Canis familiaris</name>
    <dbReference type="NCBI Taxonomy" id="9615"/>
    <lineage>
        <taxon>Eukaryota</taxon>
        <taxon>Metazoa</taxon>
        <taxon>Chordata</taxon>
        <taxon>Craniata</taxon>
        <taxon>Vertebrata</taxon>
        <taxon>Euteleostomi</taxon>
        <taxon>Mammalia</taxon>
        <taxon>Eutheria</taxon>
        <taxon>Laurasiatheria</taxon>
        <taxon>Carnivora</taxon>
        <taxon>Caniformia</taxon>
        <taxon>Canidae</taxon>
        <taxon>Canis</taxon>
    </lineage>
</organism>
<keyword id="KW-0053">Apoptosis</keyword>
<keyword id="KW-0496">Mitochondrion</keyword>
<keyword id="KW-1185">Reference proteome</keyword>
<reference key="1">
    <citation type="submission" date="2006-03" db="EMBL/GenBank/DDBJ databases">
        <authorList>
            <person name="Schade B."/>
            <person name="Rickenbacher A.B."/>
            <person name="Keller S.M."/>
            <person name="Wimmershoff J."/>
            <person name="Guscetti F."/>
        </authorList>
    </citation>
    <scope>NUCLEOTIDE SEQUENCE [MRNA]</scope>
</reference>
<gene>
    <name type="primary">PMAIP1</name>
    <name type="synonym">NOXA</name>
</gene>
<name>APR_CANLF</name>
<proteinExistence type="inferred from homology"/>